<protein>
    <recommendedName>
        <fullName evidence="1">Glycerol-3-phosphate acyltransferase</fullName>
    </recommendedName>
    <alternativeName>
        <fullName evidence="1">Acyl-PO4 G3P acyltransferase</fullName>
    </alternativeName>
    <alternativeName>
        <fullName evidence="1">Acyl-phosphate--glycerol-3-phosphate acyltransferase</fullName>
    </alternativeName>
    <alternativeName>
        <fullName evidence="1">G3P acyltransferase</fullName>
        <shortName evidence="1">GPAT</shortName>
        <ecNumber evidence="1">2.3.1.275</ecNumber>
    </alternativeName>
    <alternativeName>
        <fullName evidence="1">Lysophosphatidic acid synthase</fullName>
        <shortName evidence="1">LPA synthase</shortName>
    </alternativeName>
</protein>
<dbReference type="EC" id="2.3.1.275" evidence="1"/>
<dbReference type="EMBL" id="CP000235">
    <property type="protein sequence ID" value="ABD44283.1"/>
    <property type="molecule type" value="Genomic_DNA"/>
</dbReference>
<dbReference type="SMR" id="Q2GLU7"/>
<dbReference type="STRING" id="212042.APH_0017"/>
<dbReference type="PaxDb" id="212042-APH_0017"/>
<dbReference type="EnsemblBacteria" id="ABD44283">
    <property type="protein sequence ID" value="ABD44283"/>
    <property type="gene ID" value="APH_0017"/>
</dbReference>
<dbReference type="KEGG" id="aph:APH_0017"/>
<dbReference type="eggNOG" id="COG0344">
    <property type="taxonomic scope" value="Bacteria"/>
</dbReference>
<dbReference type="HOGENOM" id="CLU_081254_4_0_5"/>
<dbReference type="UniPathway" id="UPA00085"/>
<dbReference type="Proteomes" id="UP000001943">
    <property type="component" value="Chromosome"/>
</dbReference>
<dbReference type="GO" id="GO:0005886">
    <property type="term" value="C:plasma membrane"/>
    <property type="evidence" value="ECO:0007669"/>
    <property type="project" value="UniProtKB-SubCell"/>
</dbReference>
<dbReference type="GO" id="GO:0043772">
    <property type="term" value="F:acyl-phosphate glycerol-3-phosphate acyltransferase activity"/>
    <property type="evidence" value="ECO:0007669"/>
    <property type="project" value="UniProtKB-UniRule"/>
</dbReference>
<dbReference type="GO" id="GO:0008654">
    <property type="term" value="P:phospholipid biosynthetic process"/>
    <property type="evidence" value="ECO:0007669"/>
    <property type="project" value="UniProtKB-UniRule"/>
</dbReference>
<dbReference type="HAMAP" id="MF_01043">
    <property type="entry name" value="PlsY"/>
    <property type="match status" value="1"/>
</dbReference>
<dbReference type="InterPro" id="IPR003811">
    <property type="entry name" value="G3P_acylTferase_PlsY"/>
</dbReference>
<dbReference type="NCBIfam" id="TIGR00023">
    <property type="entry name" value="glycerol-3-phosphate 1-O-acyltransferase PlsY"/>
    <property type="match status" value="1"/>
</dbReference>
<dbReference type="PANTHER" id="PTHR30309:SF0">
    <property type="entry name" value="GLYCEROL-3-PHOSPHATE ACYLTRANSFERASE-RELATED"/>
    <property type="match status" value="1"/>
</dbReference>
<dbReference type="PANTHER" id="PTHR30309">
    <property type="entry name" value="INNER MEMBRANE PROTEIN YGIH"/>
    <property type="match status" value="1"/>
</dbReference>
<dbReference type="Pfam" id="PF02660">
    <property type="entry name" value="G3P_acyltransf"/>
    <property type="match status" value="1"/>
</dbReference>
<dbReference type="SMART" id="SM01207">
    <property type="entry name" value="G3P_acyltransf"/>
    <property type="match status" value="1"/>
</dbReference>
<comment type="function">
    <text evidence="1">Catalyzes the transfer of an acyl group from acyl-phosphate (acyl-PO(4)) to glycerol-3-phosphate (G3P) to form lysophosphatidic acid (LPA). This enzyme utilizes acyl-phosphate as fatty acyl donor, but not acyl-CoA or acyl-ACP.</text>
</comment>
<comment type="catalytic activity">
    <reaction evidence="1">
        <text>an acyl phosphate + sn-glycerol 3-phosphate = a 1-acyl-sn-glycero-3-phosphate + phosphate</text>
        <dbReference type="Rhea" id="RHEA:34075"/>
        <dbReference type="ChEBI" id="CHEBI:43474"/>
        <dbReference type="ChEBI" id="CHEBI:57597"/>
        <dbReference type="ChEBI" id="CHEBI:57970"/>
        <dbReference type="ChEBI" id="CHEBI:59918"/>
        <dbReference type="EC" id="2.3.1.275"/>
    </reaction>
</comment>
<comment type="pathway">
    <text evidence="1">Lipid metabolism; phospholipid metabolism.</text>
</comment>
<comment type="subunit">
    <text evidence="1">Probably interacts with PlsX.</text>
</comment>
<comment type="subcellular location">
    <subcellularLocation>
        <location evidence="1">Cell inner membrane</location>
        <topology evidence="1">Multi-pass membrane protein</topology>
    </subcellularLocation>
</comment>
<comment type="similarity">
    <text evidence="1">Belongs to the PlsY family.</text>
</comment>
<organism>
    <name type="scientific">Anaplasma phagocytophilum (strain HZ)</name>
    <dbReference type="NCBI Taxonomy" id="212042"/>
    <lineage>
        <taxon>Bacteria</taxon>
        <taxon>Pseudomonadati</taxon>
        <taxon>Pseudomonadota</taxon>
        <taxon>Alphaproteobacteria</taxon>
        <taxon>Rickettsiales</taxon>
        <taxon>Anaplasmataceae</taxon>
        <taxon>Anaplasma</taxon>
        <taxon>phagocytophilum group</taxon>
    </lineage>
</organism>
<sequence length="192" mass="21303">MFIAILMGAYLLGSIPFAYILTKLMAKRDIREVGSKNVGATNVFRVNKGLAGLVLLLDIAKSAVLIYSLKEYDIVSTKEELCIVGLLSVLGHIYPIWLKFKGGKGVATGIGVIIPLNPLMLCVFFISWLFTFNNTRYASLSSIVSIIATMIVCYLTESGVVALLYTVQSILILFKHRENIVRLIKREEKKVI</sequence>
<evidence type="ECO:0000255" key="1">
    <source>
        <dbReference type="HAMAP-Rule" id="MF_01043"/>
    </source>
</evidence>
<proteinExistence type="inferred from homology"/>
<feature type="chain" id="PRO_0000250283" description="Glycerol-3-phosphate acyltransferase">
    <location>
        <begin position="1"/>
        <end position="192"/>
    </location>
</feature>
<feature type="transmembrane region" description="Helical" evidence="1">
    <location>
        <begin position="1"/>
        <end position="21"/>
    </location>
</feature>
<feature type="transmembrane region" description="Helical" evidence="1">
    <location>
        <begin position="49"/>
        <end position="69"/>
    </location>
</feature>
<feature type="transmembrane region" description="Helical" evidence="1">
    <location>
        <begin position="80"/>
        <end position="100"/>
    </location>
</feature>
<feature type="transmembrane region" description="Helical" evidence="1">
    <location>
        <begin position="110"/>
        <end position="130"/>
    </location>
</feature>
<feature type="transmembrane region" description="Helical" evidence="1">
    <location>
        <begin position="143"/>
        <end position="163"/>
    </location>
</feature>
<name>PLSY_ANAPZ</name>
<reference key="1">
    <citation type="journal article" date="2006" name="PLoS Genet.">
        <title>Comparative genomics of emerging human ehrlichiosis agents.</title>
        <authorList>
            <person name="Dunning Hotopp J.C."/>
            <person name="Lin M."/>
            <person name="Madupu R."/>
            <person name="Crabtree J."/>
            <person name="Angiuoli S.V."/>
            <person name="Eisen J.A."/>
            <person name="Seshadri R."/>
            <person name="Ren Q."/>
            <person name="Wu M."/>
            <person name="Utterback T.R."/>
            <person name="Smith S."/>
            <person name="Lewis M."/>
            <person name="Khouri H."/>
            <person name="Zhang C."/>
            <person name="Niu H."/>
            <person name="Lin Q."/>
            <person name="Ohashi N."/>
            <person name="Zhi N."/>
            <person name="Nelson W.C."/>
            <person name="Brinkac L.M."/>
            <person name="Dodson R.J."/>
            <person name="Rosovitz M.J."/>
            <person name="Sundaram J.P."/>
            <person name="Daugherty S.C."/>
            <person name="Davidsen T."/>
            <person name="Durkin A.S."/>
            <person name="Gwinn M.L."/>
            <person name="Haft D.H."/>
            <person name="Selengut J.D."/>
            <person name="Sullivan S.A."/>
            <person name="Zafar N."/>
            <person name="Zhou L."/>
            <person name="Benahmed F."/>
            <person name="Forberger H."/>
            <person name="Halpin R."/>
            <person name="Mulligan S."/>
            <person name="Robinson J."/>
            <person name="White O."/>
            <person name="Rikihisa Y."/>
            <person name="Tettelin H."/>
        </authorList>
    </citation>
    <scope>NUCLEOTIDE SEQUENCE [LARGE SCALE GENOMIC DNA]</scope>
    <source>
        <strain>HZ</strain>
    </source>
</reference>
<keyword id="KW-0997">Cell inner membrane</keyword>
<keyword id="KW-1003">Cell membrane</keyword>
<keyword id="KW-0444">Lipid biosynthesis</keyword>
<keyword id="KW-0443">Lipid metabolism</keyword>
<keyword id="KW-0472">Membrane</keyword>
<keyword id="KW-0594">Phospholipid biosynthesis</keyword>
<keyword id="KW-1208">Phospholipid metabolism</keyword>
<keyword id="KW-0808">Transferase</keyword>
<keyword id="KW-0812">Transmembrane</keyword>
<keyword id="KW-1133">Transmembrane helix</keyword>
<accession>Q2GLU7</accession>
<gene>
    <name evidence="1" type="primary">plsY</name>
    <name type="ordered locus">APH_0017</name>
</gene>